<gene>
    <name type="ordered locus">Rv0953c</name>
    <name type="ORF">MTCY10D7.21</name>
</gene>
<proteinExistence type="evidence at protein level"/>
<evidence type="ECO:0000305" key="1"/>
<feature type="chain" id="PRO_0000103749" description="Uncharacterized protein Rv0953c">
    <location>
        <begin position="1"/>
        <end position="282"/>
    </location>
</feature>
<accession>P9WKN5</accession>
<accession>L0T5E2</accession>
<accession>P64769</accession>
<accession>P71557</accession>
<reference key="1">
    <citation type="journal article" date="1998" name="Nature">
        <title>Deciphering the biology of Mycobacterium tuberculosis from the complete genome sequence.</title>
        <authorList>
            <person name="Cole S.T."/>
            <person name="Brosch R."/>
            <person name="Parkhill J."/>
            <person name="Garnier T."/>
            <person name="Churcher C.M."/>
            <person name="Harris D.E."/>
            <person name="Gordon S.V."/>
            <person name="Eiglmeier K."/>
            <person name="Gas S."/>
            <person name="Barry C.E. III"/>
            <person name="Tekaia F."/>
            <person name="Badcock K."/>
            <person name="Basham D."/>
            <person name="Brown D."/>
            <person name="Chillingworth T."/>
            <person name="Connor R."/>
            <person name="Davies R.M."/>
            <person name="Devlin K."/>
            <person name="Feltwell T."/>
            <person name="Gentles S."/>
            <person name="Hamlin N."/>
            <person name="Holroyd S."/>
            <person name="Hornsby T."/>
            <person name="Jagels K."/>
            <person name="Krogh A."/>
            <person name="McLean J."/>
            <person name="Moule S."/>
            <person name="Murphy L.D."/>
            <person name="Oliver S."/>
            <person name="Osborne J."/>
            <person name="Quail M.A."/>
            <person name="Rajandream M.A."/>
            <person name="Rogers J."/>
            <person name="Rutter S."/>
            <person name="Seeger K."/>
            <person name="Skelton S."/>
            <person name="Squares S."/>
            <person name="Squares R."/>
            <person name="Sulston J.E."/>
            <person name="Taylor K."/>
            <person name="Whitehead S."/>
            <person name="Barrell B.G."/>
        </authorList>
    </citation>
    <scope>NUCLEOTIDE SEQUENCE [LARGE SCALE GENOMIC DNA]</scope>
    <source>
        <strain>ATCC 25618 / H37Rv</strain>
    </source>
</reference>
<reference key="2">
    <citation type="journal article" date="2011" name="Mol. Cell. Proteomics">
        <title>Proteogenomic analysis of Mycobacterium tuberculosis by high resolution mass spectrometry.</title>
        <authorList>
            <person name="Kelkar D.S."/>
            <person name="Kumar D."/>
            <person name="Kumar P."/>
            <person name="Balakrishnan L."/>
            <person name="Muthusamy B."/>
            <person name="Yadav A.K."/>
            <person name="Shrivastava P."/>
            <person name="Marimuthu A."/>
            <person name="Anand S."/>
            <person name="Sundaram H."/>
            <person name="Kingsbury R."/>
            <person name="Harsha H.C."/>
            <person name="Nair B."/>
            <person name="Prasad T.S."/>
            <person name="Chauhan D.S."/>
            <person name="Katoch K."/>
            <person name="Katoch V.M."/>
            <person name="Kumar P."/>
            <person name="Chaerkady R."/>
            <person name="Ramachandran S."/>
            <person name="Dash D."/>
            <person name="Pandey A."/>
        </authorList>
    </citation>
    <scope>IDENTIFICATION BY MASS SPECTROMETRY [LARGE SCALE ANALYSIS]</scope>
    <source>
        <strain>ATCC 25618 / H37Rv</strain>
    </source>
</reference>
<sequence length="282" mass="30913">MHYGLVLFTSDRGITPAAAARLAESHGFRTFYVPEHTHIPVKRQAAHPTTGDASLPDDRYMRTLDPWVSLGAASAVTSRIRLATAVALPVEHDPITLAKSIATLDHLSHGRVSVGVGFGWNTDELVDHGVPPGRRRTMLREYLEAMRALWTQEEACYDGEFVKFGPSWAWPKPVQPHIPVLVGAAGTEKNFKWIARSADGWITTPRDVDIDEPVKLLQDIWAAAGRDGLPQIVALDVKPVPDKLARWAELGVTEVLFGMPDRSADDAAAYVERLAAKLACCV</sequence>
<comment type="similarity">
    <text evidence="1">To M.tuberculosis Rv2161c and Rv3079c.</text>
</comment>
<name>Y953_MYCTU</name>
<organism>
    <name type="scientific">Mycobacterium tuberculosis (strain ATCC 25618 / H37Rv)</name>
    <dbReference type="NCBI Taxonomy" id="83332"/>
    <lineage>
        <taxon>Bacteria</taxon>
        <taxon>Bacillati</taxon>
        <taxon>Actinomycetota</taxon>
        <taxon>Actinomycetes</taxon>
        <taxon>Mycobacteriales</taxon>
        <taxon>Mycobacteriaceae</taxon>
        <taxon>Mycobacterium</taxon>
        <taxon>Mycobacterium tuberculosis complex</taxon>
    </lineage>
</organism>
<keyword id="KW-1185">Reference proteome</keyword>
<protein>
    <recommendedName>
        <fullName>Uncharacterized protein Rv0953c</fullName>
    </recommendedName>
</protein>
<dbReference type="EMBL" id="AL123456">
    <property type="protein sequence ID" value="CCP43701.1"/>
    <property type="molecule type" value="Genomic_DNA"/>
</dbReference>
<dbReference type="PIR" id="G70716">
    <property type="entry name" value="G70716"/>
</dbReference>
<dbReference type="RefSeq" id="NP_215468.1">
    <property type="nucleotide sequence ID" value="NC_000962.3"/>
</dbReference>
<dbReference type="RefSeq" id="WP_003404873.1">
    <property type="nucleotide sequence ID" value="NZ_NVQJ01000001.1"/>
</dbReference>
<dbReference type="SMR" id="P9WKN5"/>
<dbReference type="STRING" id="83332.Rv0953c"/>
<dbReference type="PaxDb" id="83332-Rv0953c"/>
<dbReference type="DNASU" id="885419"/>
<dbReference type="GeneID" id="885419"/>
<dbReference type="KEGG" id="mtu:Rv0953c"/>
<dbReference type="KEGG" id="mtv:RVBD_0953c"/>
<dbReference type="TubercuList" id="Rv0953c"/>
<dbReference type="eggNOG" id="COG2141">
    <property type="taxonomic scope" value="Bacteria"/>
</dbReference>
<dbReference type="InParanoid" id="P9WKN5"/>
<dbReference type="OrthoDB" id="3206024at2"/>
<dbReference type="PhylomeDB" id="P9WKN5"/>
<dbReference type="Proteomes" id="UP000001584">
    <property type="component" value="Chromosome"/>
</dbReference>
<dbReference type="GO" id="GO:0016705">
    <property type="term" value="F:oxidoreductase activity, acting on paired donors, with incorporation or reduction of molecular oxygen"/>
    <property type="evidence" value="ECO:0007669"/>
    <property type="project" value="InterPro"/>
</dbReference>
<dbReference type="Gene3D" id="3.20.20.30">
    <property type="entry name" value="Luciferase-like domain"/>
    <property type="match status" value="1"/>
</dbReference>
<dbReference type="InterPro" id="IPR051260">
    <property type="entry name" value="Diverse_substr_monoxygenases"/>
</dbReference>
<dbReference type="InterPro" id="IPR019921">
    <property type="entry name" value="Lucif-like_OxRdtase_Rv2161c"/>
</dbReference>
<dbReference type="InterPro" id="IPR011251">
    <property type="entry name" value="Luciferase-like_dom"/>
</dbReference>
<dbReference type="InterPro" id="IPR036661">
    <property type="entry name" value="Luciferase-like_sf"/>
</dbReference>
<dbReference type="NCBIfam" id="TIGR03619">
    <property type="entry name" value="F420_Rv2161c"/>
    <property type="match status" value="1"/>
</dbReference>
<dbReference type="PANTHER" id="PTHR30011">
    <property type="entry name" value="ALKANESULFONATE MONOOXYGENASE-RELATED"/>
    <property type="match status" value="1"/>
</dbReference>
<dbReference type="PANTHER" id="PTHR30011:SF32">
    <property type="entry name" value="CONSERVED PROTEIN"/>
    <property type="match status" value="1"/>
</dbReference>
<dbReference type="Pfam" id="PF00296">
    <property type="entry name" value="Bac_luciferase"/>
    <property type="match status" value="1"/>
</dbReference>
<dbReference type="SUPFAM" id="SSF51679">
    <property type="entry name" value="Bacterial luciferase-like"/>
    <property type="match status" value="1"/>
</dbReference>